<accession>O20433</accession>
<comment type="function">
    <text evidence="2">Component of the ubiquinol-cytochrome c reductase complex (complex III or cytochrome b-c1 complex) that is part of the mitochondrial respiratory chain. The b-c1 complex mediates electron transfer from ubiquinol to cytochrome c. Contributes to the generation of a proton gradient across the mitochondrial membrane that is then used for ATP synthesis.</text>
</comment>
<comment type="cofactor">
    <cofactor evidence="2">
        <name>heme b</name>
        <dbReference type="ChEBI" id="CHEBI:60344"/>
    </cofactor>
    <text evidence="2">Binds 2 heme b groups non-covalently.</text>
</comment>
<comment type="subunit">
    <text evidence="2">The cytochrome bc1 complex contains 11 subunits: 3 respiratory subunits (MT-CYB, CYC1 and UQCRFS1), 2 core proteins (UQCRC1 and UQCRC2) and 6 low-molecular weight proteins (UQCRH/QCR6, UQCRB/QCR7, UQCRQ/QCR8, UQCR10/QCR9, UQCR11/QCR10 and a cleavage product of UQCRFS1). This cytochrome bc1 complex then forms a dimer.</text>
</comment>
<comment type="subcellular location">
    <subcellularLocation>
        <location evidence="2">Mitochondrion inner membrane</location>
        <topology evidence="2">Multi-pass membrane protein</topology>
    </subcellularLocation>
</comment>
<comment type="miscellaneous">
    <text evidence="1">Heme 1 (or BL or b562) is low-potential and absorbs at about 562 nm, and heme 2 (or BH or b566) is high-potential and absorbs at about 566 nm.</text>
</comment>
<comment type="similarity">
    <text evidence="3 4">Belongs to the cytochrome b family.</text>
</comment>
<comment type="caution">
    <text evidence="2">The full-length protein contains only eight transmembrane helices, not nine as predicted by bioinformatics tools.</text>
</comment>
<evidence type="ECO:0000250" key="1"/>
<evidence type="ECO:0000250" key="2">
    <source>
        <dbReference type="UniProtKB" id="P00157"/>
    </source>
</evidence>
<evidence type="ECO:0000255" key="3">
    <source>
        <dbReference type="PROSITE-ProRule" id="PRU00967"/>
    </source>
</evidence>
<evidence type="ECO:0000255" key="4">
    <source>
        <dbReference type="PROSITE-ProRule" id="PRU00968"/>
    </source>
</evidence>
<protein>
    <recommendedName>
        <fullName>Cytochrome b</fullName>
    </recommendedName>
    <alternativeName>
        <fullName>Complex III subunit 3</fullName>
    </alternativeName>
    <alternativeName>
        <fullName>Complex III subunit III</fullName>
    </alternativeName>
    <alternativeName>
        <fullName>Cytochrome b-c1 complex subunit 3</fullName>
    </alternativeName>
    <alternativeName>
        <fullName>Ubiquinol-cytochrome-c reductase complex cytochrome b subunit</fullName>
    </alternativeName>
</protein>
<gene>
    <name type="primary">MT-CYB</name>
    <name type="synonym">COB</name>
    <name type="synonym">CYTB</name>
    <name type="synonym">MTCYB</name>
</gene>
<feature type="chain" id="PRO_0000061544" description="Cytochrome b">
    <location>
        <begin position="1"/>
        <end position="381"/>
    </location>
</feature>
<feature type="transmembrane region" description="Helical" evidence="2">
    <location>
        <begin position="33"/>
        <end position="53"/>
    </location>
</feature>
<feature type="transmembrane region" description="Helical" evidence="2">
    <location>
        <begin position="77"/>
        <end position="98"/>
    </location>
</feature>
<feature type="transmembrane region" description="Helical" evidence="2">
    <location>
        <begin position="113"/>
        <end position="133"/>
    </location>
</feature>
<feature type="transmembrane region" description="Helical" evidence="2">
    <location>
        <begin position="178"/>
        <end position="198"/>
    </location>
</feature>
<feature type="transmembrane region" description="Helical" evidence="2">
    <location>
        <begin position="226"/>
        <end position="246"/>
    </location>
</feature>
<feature type="transmembrane region" description="Helical" evidence="2">
    <location>
        <begin position="288"/>
        <end position="308"/>
    </location>
</feature>
<feature type="transmembrane region" description="Helical" evidence="2">
    <location>
        <begin position="320"/>
        <end position="340"/>
    </location>
</feature>
<feature type="transmembrane region" description="Helical" evidence="2">
    <location>
        <begin position="347"/>
        <end position="367"/>
    </location>
</feature>
<feature type="binding site" description="axial binding residue" evidence="2">
    <location>
        <position position="83"/>
    </location>
    <ligand>
        <name>heme b</name>
        <dbReference type="ChEBI" id="CHEBI:60344"/>
        <label>b562</label>
    </ligand>
    <ligandPart>
        <name>Fe</name>
        <dbReference type="ChEBI" id="CHEBI:18248"/>
    </ligandPart>
</feature>
<feature type="binding site" description="axial binding residue" evidence="2">
    <location>
        <position position="97"/>
    </location>
    <ligand>
        <name>heme b</name>
        <dbReference type="ChEBI" id="CHEBI:60344"/>
        <label>b566</label>
    </ligand>
    <ligandPart>
        <name>Fe</name>
        <dbReference type="ChEBI" id="CHEBI:18248"/>
    </ligandPart>
</feature>
<feature type="binding site" description="axial binding residue" evidence="2">
    <location>
        <position position="182"/>
    </location>
    <ligand>
        <name>heme b</name>
        <dbReference type="ChEBI" id="CHEBI:60344"/>
        <label>b562</label>
    </ligand>
    <ligandPart>
        <name>Fe</name>
        <dbReference type="ChEBI" id="CHEBI:18248"/>
    </ligandPart>
</feature>
<feature type="binding site" description="axial binding residue" evidence="2">
    <location>
        <position position="196"/>
    </location>
    <ligand>
        <name>heme b</name>
        <dbReference type="ChEBI" id="CHEBI:60344"/>
        <label>b566</label>
    </ligand>
    <ligandPart>
        <name>Fe</name>
        <dbReference type="ChEBI" id="CHEBI:18248"/>
    </ligandPart>
</feature>
<feature type="binding site" evidence="2">
    <location>
        <position position="201"/>
    </location>
    <ligand>
        <name>a ubiquinone</name>
        <dbReference type="ChEBI" id="CHEBI:16389"/>
    </ligand>
</feature>
<proteinExistence type="inferred from homology"/>
<keyword id="KW-0249">Electron transport</keyword>
<keyword id="KW-0349">Heme</keyword>
<keyword id="KW-0408">Iron</keyword>
<keyword id="KW-0472">Membrane</keyword>
<keyword id="KW-0479">Metal-binding</keyword>
<keyword id="KW-0496">Mitochondrion</keyword>
<keyword id="KW-0999">Mitochondrion inner membrane</keyword>
<keyword id="KW-0679">Respiratory chain</keyword>
<keyword id="KW-0812">Transmembrane</keyword>
<keyword id="KW-1133">Transmembrane helix</keyword>
<keyword id="KW-0813">Transport</keyword>
<keyword id="KW-0830">Ubiquinone</keyword>
<organism>
    <name type="scientific">Sminthopsis macroura</name>
    <name type="common">Stripe-faced dunnart</name>
    <dbReference type="NCBI Taxonomy" id="9302"/>
    <lineage>
        <taxon>Eukaryota</taxon>
        <taxon>Metazoa</taxon>
        <taxon>Chordata</taxon>
        <taxon>Craniata</taxon>
        <taxon>Vertebrata</taxon>
        <taxon>Euteleostomi</taxon>
        <taxon>Mammalia</taxon>
        <taxon>Metatheria</taxon>
        <taxon>Dasyuromorphia</taxon>
        <taxon>Dasyuridae</taxon>
        <taxon>Sminthopsis</taxon>
    </lineage>
</organism>
<dbReference type="EMBL" id="AF001582">
    <property type="protein sequence ID" value="AAB91372.1"/>
    <property type="molecule type" value="Genomic_DNA"/>
</dbReference>
<dbReference type="SMR" id="O20433"/>
<dbReference type="GO" id="GO:0005743">
    <property type="term" value="C:mitochondrial inner membrane"/>
    <property type="evidence" value="ECO:0007669"/>
    <property type="project" value="UniProtKB-SubCell"/>
</dbReference>
<dbReference type="GO" id="GO:0045275">
    <property type="term" value="C:respiratory chain complex III"/>
    <property type="evidence" value="ECO:0007669"/>
    <property type="project" value="InterPro"/>
</dbReference>
<dbReference type="GO" id="GO:0046872">
    <property type="term" value="F:metal ion binding"/>
    <property type="evidence" value="ECO:0007669"/>
    <property type="project" value="UniProtKB-KW"/>
</dbReference>
<dbReference type="GO" id="GO:0008121">
    <property type="term" value="F:ubiquinol-cytochrome-c reductase activity"/>
    <property type="evidence" value="ECO:0007669"/>
    <property type="project" value="InterPro"/>
</dbReference>
<dbReference type="GO" id="GO:0006122">
    <property type="term" value="P:mitochondrial electron transport, ubiquinol to cytochrome c"/>
    <property type="evidence" value="ECO:0007669"/>
    <property type="project" value="TreeGrafter"/>
</dbReference>
<dbReference type="CDD" id="cd00290">
    <property type="entry name" value="cytochrome_b_C"/>
    <property type="match status" value="1"/>
</dbReference>
<dbReference type="CDD" id="cd00284">
    <property type="entry name" value="Cytochrome_b_N"/>
    <property type="match status" value="1"/>
</dbReference>
<dbReference type="FunFam" id="1.20.810.10:FF:000002">
    <property type="entry name" value="Cytochrome b"/>
    <property type="match status" value="1"/>
</dbReference>
<dbReference type="Gene3D" id="1.20.810.10">
    <property type="entry name" value="Cytochrome Bc1 Complex, Chain C"/>
    <property type="match status" value="1"/>
</dbReference>
<dbReference type="InterPro" id="IPR005798">
    <property type="entry name" value="Cyt_b/b6_C"/>
</dbReference>
<dbReference type="InterPro" id="IPR036150">
    <property type="entry name" value="Cyt_b/b6_C_sf"/>
</dbReference>
<dbReference type="InterPro" id="IPR005797">
    <property type="entry name" value="Cyt_b/b6_N"/>
</dbReference>
<dbReference type="InterPro" id="IPR027387">
    <property type="entry name" value="Cytb/b6-like_sf"/>
</dbReference>
<dbReference type="InterPro" id="IPR030689">
    <property type="entry name" value="Cytochrome_b"/>
</dbReference>
<dbReference type="InterPro" id="IPR048260">
    <property type="entry name" value="Cytochrome_b_C_euk/bac"/>
</dbReference>
<dbReference type="InterPro" id="IPR048259">
    <property type="entry name" value="Cytochrome_b_N_euk/bac"/>
</dbReference>
<dbReference type="InterPro" id="IPR016174">
    <property type="entry name" value="Di-haem_cyt_TM"/>
</dbReference>
<dbReference type="PANTHER" id="PTHR19271">
    <property type="entry name" value="CYTOCHROME B"/>
    <property type="match status" value="1"/>
</dbReference>
<dbReference type="PANTHER" id="PTHR19271:SF16">
    <property type="entry name" value="CYTOCHROME B"/>
    <property type="match status" value="1"/>
</dbReference>
<dbReference type="Pfam" id="PF00032">
    <property type="entry name" value="Cytochrom_B_C"/>
    <property type="match status" value="1"/>
</dbReference>
<dbReference type="Pfam" id="PF00033">
    <property type="entry name" value="Cytochrome_B"/>
    <property type="match status" value="1"/>
</dbReference>
<dbReference type="PIRSF" id="PIRSF038885">
    <property type="entry name" value="COB"/>
    <property type="match status" value="1"/>
</dbReference>
<dbReference type="SUPFAM" id="SSF81648">
    <property type="entry name" value="a domain/subunit of cytochrome bc1 complex (Ubiquinol-cytochrome c reductase)"/>
    <property type="match status" value="1"/>
</dbReference>
<dbReference type="SUPFAM" id="SSF81342">
    <property type="entry name" value="Transmembrane di-heme cytochromes"/>
    <property type="match status" value="1"/>
</dbReference>
<dbReference type="PROSITE" id="PS51003">
    <property type="entry name" value="CYTB_CTER"/>
    <property type="match status" value="1"/>
</dbReference>
<dbReference type="PROSITE" id="PS51002">
    <property type="entry name" value="CYTB_NTER"/>
    <property type="match status" value="1"/>
</dbReference>
<reference key="1">
    <citation type="journal article" date="1997" name="Mol. Phylogenet. Evol.">
        <title>A multigene assessment of phylogenetic relationships within the dasyurid marsupial subfamily Sminthopsinae.</title>
        <authorList>
            <person name="Krajewski C."/>
            <person name="Blacket M."/>
            <person name="Buckley L."/>
            <person name="Westerman M."/>
        </authorList>
    </citation>
    <scope>NUCLEOTIDE SEQUENCE [GENOMIC DNA]</scope>
</reference>
<sequence>MTNLRKTHPLMKIVNHSFIDLPAPSNISAWWNFGSLLGICLMIQILTGLFLAMHYTSDTLTAFSSVAHICRDVNYGWLIRNLHANGASMFFMCLFLHVGRGIYYGSYLYKETWNIGVILLLTVMATAFVGYVLPWGQMSFWGATVITNLLSAIPYIGMTLAEWIWGGFSVDKATLTRFFAFHFILPFIITALVIVHLLFLHETGSNNPSGINPDADKIPFHPYYTIKDALGFMFLLLVLLSLALFSPDSLGDPDNFSPANPLSTPPHIKPEWYFLFAYAILRSIPNKLGGVLALLASILILLIIPFLHTANQRSMMFRPISQTLFWILTANLMTLTWIGGQPVEQPFIIIGQLASILYFMLILILMPLAGLFENYMLKPKW</sequence>
<geneLocation type="mitochondrion"/>
<name>CYB_SMIMA</name>